<protein>
    <recommendedName>
        <fullName>Retinol-binding protein 4</fullName>
    </recommendedName>
    <alternativeName>
        <fullName>Plasma retinol-binding protein</fullName>
        <shortName>PRBP</shortName>
        <shortName>RBP</shortName>
    </alternativeName>
</protein>
<feature type="signal peptide" evidence="1">
    <location>
        <begin position="1"/>
        <end position="18"/>
    </location>
</feature>
<feature type="chain" id="PRO_0000017967" description="Retinol-binding protein 4">
    <location>
        <begin position="19"/>
        <end position="201"/>
    </location>
</feature>
<feature type="binding site" evidence="2">
    <location>
        <position position="116"/>
    </location>
    <ligand>
        <name>substrate</name>
    </ligand>
</feature>
<feature type="modified residue" description="Omega-N-methylarginine" evidence="3">
    <location>
        <position position="139"/>
    </location>
</feature>
<feature type="disulfide bond" evidence="1">
    <location>
        <begin position="22"/>
        <end position="178"/>
    </location>
</feature>
<feature type="disulfide bond" evidence="1">
    <location>
        <begin position="88"/>
        <end position="192"/>
    </location>
</feature>
<feature type="disulfide bond" evidence="1">
    <location>
        <begin position="138"/>
        <end position="147"/>
    </location>
</feature>
<comment type="function">
    <text evidence="1">Retinol-binding protein that mediates retinol transport in blood plasma. Delivers retinol from the liver stores to the peripheral tissues. Transfers the bound all-trans retinol to STRA6, that then facilitates retinol transport across the cell membrane.</text>
</comment>
<comment type="subunit">
    <text evidence="1">Interacts with TTR. Interaction with TTR prevents its loss by filtration through the kidney glomeruli. Interacts with STRA6.</text>
</comment>
<comment type="subcellular location">
    <subcellularLocation>
        <location evidence="1">Secreted</location>
    </subcellularLocation>
</comment>
<comment type="similarity">
    <text evidence="4">Belongs to the calycin superfamily. Lipocalin family.</text>
</comment>
<sequence length="201" mass="23010">MKWVWALLLLAALGSGRAERDCRVSSFRVKENFDKARFSGTWYAMAKKDPEGLFLQDNIVAEFSVDETGQMSATAKGRVRLLNNWDVCADMVGTFTDTEDPAKFKMKYWGVASFLQKGNDDHWIVDTDYDTYAVQYSCRLLNLDGTCADSYSFVFSRDPNGLPPEAQKIVRQRQEELCLARQYRLIVHNGYCDGRSERNLL</sequence>
<organism>
    <name type="scientific">Pan troglodytes</name>
    <name type="common">Chimpanzee</name>
    <dbReference type="NCBI Taxonomy" id="9598"/>
    <lineage>
        <taxon>Eukaryota</taxon>
        <taxon>Metazoa</taxon>
        <taxon>Chordata</taxon>
        <taxon>Craniata</taxon>
        <taxon>Vertebrata</taxon>
        <taxon>Euteleostomi</taxon>
        <taxon>Mammalia</taxon>
        <taxon>Eutheria</taxon>
        <taxon>Euarchontoglires</taxon>
        <taxon>Primates</taxon>
        <taxon>Haplorrhini</taxon>
        <taxon>Catarrhini</taxon>
        <taxon>Hominidae</taxon>
        <taxon>Pan</taxon>
    </lineage>
</organism>
<proteinExistence type="inferred from homology"/>
<reference key="1">
    <citation type="submission" date="2003-10" db="EMBL/GenBank/DDBJ databases">
        <title>Chimpanzee DNA sequence of RP43-36M02, complete sequence.</title>
        <authorList>
            <person name="Maekawa K."/>
            <person name="Kojima T."/>
            <person name="Fujiyama A."/>
            <person name="Hattori M."/>
            <person name="Sakaki Y."/>
        </authorList>
    </citation>
    <scope>NUCLEOTIDE SEQUENCE [GENOMIC DNA]</scope>
</reference>
<gene>
    <name type="primary">RBP4</name>
</gene>
<dbReference type="EMBL" id="AB124586">
    <property type="protein sequence ID" value="BAD16621.1"/>
    <property type="molecule type" value="Genomic_DNA"/>
</dbReference>
<dbReference type="RefSeq" id="NP_001038960.1">
    <property type="nucleotide sequence ID" value="NM_001045495.1"/>
</dbReference>
<dbReference type="RefSeq" id="XP_009457151.1">
    <property type="nucleotide sequence ID" value="XM_009458876.4"/>
</dbReference>
<dbReference type="RefSeq" id="XP_009457152.1">
    <property type="nucleotide sequence ID" value="XM_009458877.2"/>
</dbReference>
<dbReference type="RefSeq" id="XP_063673686.1">
    <property type="nucleotide sequence ID" value="XM_063817616.1"/>
</dbReference>
<dbReference type="BMRB" id="P61641"/>
<dbReference type="SMR" id="P61641"/>
<dbReference type="FunCoup" id="P61641">
    <property type="interactions" value="286"/>
</dbReference>
<dbReference type="STRING" id="9598.ENSPTRP00000004830"/>
<dbReference type="PaxDb" id="9598-ENSPTRP00000004830"/>
<dbReference type="Ensembl" id="ENSPTRT00000005226.4">
    <property type="protein sequence ID" value="ENSPTRP00000004830.3"/>
    <property type="gene ID" value="ENSPTRG00000002768.5"/>
</dbReference>
<dbReference type="GeneID" id="450617"/>
<dbReference type="KEGG" id="ptr:450617"/>
<dbReference type="CTD" id="5950"/>
<dbReference type="VGNC" id="VGNC:5717">
    <property type="gene designation" value="RBP4"/>
</dbReference>
<dbReference type="eggNOG" id="ENOG502RXEW">
    <property type="taxonomic scope" value="Eukaryota"/>
</dbReference>
<dbReference type="GeneTree" id="ENSGT00510000047107"/>
<dbReference type="HOGENOM" id="CLU_094618_0_0_1"/>
<dbReference type="InParanoid" id="P61641"/>
<dbReference type="OMA" id="KYWGMAS"/>
<dbReference type="OrthoDB" id="793at9604"/>
<dbReference type="TreeFam" id="TF331445"/>
<dbReference type="Proteomes" id="UP000002277">
    <property type="component" value="Chromosome 10"/>
</dbReference>
<dbReference type="Bgee" id="ENSPTRG00000002768">
    <property type="expression patterns" value="Expressed in liver and 15 other cell types or tissues"/>
</dbReference>
<dbReference type="GO" id="GO:0005615">
    <property type="term" value="C:extracellular space"/>
    <property type="evidence" value="ECO:0000250"/>
    <property type="project" value="UniProtKB"/>
</dbReference>
<dbReference type="GO" id="GO:0140104">
    <property type="term" value="F:molecular carrier activity"/>
    <property type="evidence" value="ECO:0007669"/>
    <property type="project" value="Ensembl"/>
</dbReference>
<dbReference type="GO" id="GO:0016918">
    <property type="term" value="F:retinal binding"/>
    <property type="evidence" value="ECO:0007669"/>
    <property type="project" value="UniProtKB-KW"/>
</dbReference>
<dbReference type="GO" id="GO:0019841">
    <property type="term" value="F:retinol binding"/>
    <property type="evidence" value="ECO:0000318"/>
    <property type="project" value="GO_Central"/>
</dbReference>
<dbReference type="GO" id="GO:0034632">
    <property type="term" value="F:retinol transmembrane transporter activity"/>
    <property type="evidence" value="ECO:0007669"/>
    <property type="project" value="InterPro"/>
</dbReference>
<dbReference type="GO" id="GO:0048738">
    <property type="term" value="P:cardiac muscle tissue development"/>
    <property type="evidence" value="ECO:0007669"/>
    <property type="project" value="Ensembl"/>
</dbReference>
<dbReference type="GO" id="GO:0050908">
    <property type="term" value="P:detection of light stimulus involved in visual perception"/>
    <property type="evidence" value="ECO:0007669"/>
    <property type="project" value="Ensembl"/>
</dbReference>
<dbReference type="GO" id="GO:0048562">
    <property type="term" value="P:embryonic organ morphogenesis"/>
    <property type="evidence" value="ECO:0007669"/>
    <property type="project" value="Ensembl"/>
</dbReference>
<dbReference type="GO" id="GO:0060059">
    <property type="term" value="P:embryonic retina morphogenesis in camera-type eye"/>
    <property type="evidence" value="ECO:0007669"/>
    <property type="project" value="Ensembl"/>
</dbReference>
<dbReference type="GO" id="GO:0048706">
    <property type="term" value="P:embryonic skeletal system development"/>
    <property type="evidence" value="ECO:0007669"/>
    <property type="project" value="Ensembl"/>
</dbReference>
<dbReference type="GO" id="GO:0048807">
    <property type="term" value="P:female genitalia morphogenesis"/>
    <property type="evidence" value="ECO:0007669"/>
    <property type="project" value="Ensembl"/>
</dbReference>
<dbReference type="GO" id="GO:0006094">
    <property type="term" value="P:gluconeogenesis"/>
    <property type="evidence" value="ECO:0007669"/>
    <property type="project" value="Ensembl"/>
</dbReference>
<dbReference type="GO" id="GO:0042593">
    <property type="term" value="P:glucose homeostasis"/>
    <property type="evidence" value="ECO:0007669"/>
    <property type="project" value="Ensembl"/>
</dbReference>
<dbReference type="GO" id="GO:0060347">
    <property type="term" value="P:heart trabecula formation"/>
    <property type="evidence" value="ECO:0007669"/>
    <property type="project" value="Ensembl"/>
</dbReference>
<dbReference type="GO" id="GO:0030324">
    <property type="term" value="P:lung development"/>
    <property type="evidence" value="ECO:0007669"/>
    <property type="project" value="Ensembl"/>
</dbReference>
<dbReference type="GO" id="GO:0030277">
    <property type="term" value="P:maintenance of gastrointestinal epithelium"/>
    <property type="evidence" value="ECO:0007669"/>
    <property type="project" value="Ensembl"/>
</dbReference>
<dbReference type="GO" id="GO:0008584">
    <property type="term" value="P:male gonad development"/>
    <property type="evidence" value="ECO:0007669"/>
    <property type="project" value="Ensembl"/>
</dbReference>
<dbReference type="GO" id="GO:0060044">
    <property type="term" value="P:negative regulation of cardiac muscle cell proliferation"/>
    <property type="evidence" value="ECO:0007669"/>
    <property type="project" value="Ensembl"/>
</dbReference>
<dbReference type="GO" id="GO:0007603">
    <property type="term" value="P:phototransduction, visible light"/>
    <property type="evidence" value="ECO:0007669"/>
    <property type="project" value="Ensembl"/>
</dbReference>
<dbReference type="GO" id="GO:0002639">
    <property type="term" value="P:positive regulation of immunoglobulin production"/>
    <property type="evidence" value="ECO:0007669"/>
    <property type="project" value="Ensembl"/>
</dbReference>
<dbReference type="GO" id="GO:0032024">
    <property type="term" value="P:positive regulation of insulin secretion"/>
    <property type="evidence" value="ECO:0007669"/>
    <property type="project" value="Ensembl"/>
</dbReference>
<dbReference type="GO" id="GO:0032868">
    <property type="term" value="P:response to insulin"/>
    <property type="evidence" value="ECO:0007669"/>
    <property type="project" value="Ensembl"/>
</dbReference>
<dbReference type="GO" id="GO:0032526">
    <property type="term" value="P:response to retinoic acid"/>
    <property type="evidence" value="ECO:0007669"/>
    <property type="project" value="Ensembl"/>
</dbReference>
<dbReference type="GO" id="GO:0042574">
    <property type="term" value="P:retinal metabolic process"/>
    <property type="evidence" value="ECO:0007669"/>
    <property type="project" value="Ensembl"/>
</dbReference>
<dbReference type="GO" id="GO:0042572">
    <property type="term" value="P:retinol metabolic process"/>
    <property type="evidence" value="ECO:0007669"/>
    <property type="project" value="Ensembl"/>
</dbReference>
<dbReference type="GO" id="GO:0034633">
    <property type="term" value="P:retinol transport"/>
    <property type="evidence" value="ECO:0000318"/>
    <property type="project" value="GO_Central"/>
</dbReference>
<dbReference type="GO" id="GO:0007283">
    <property type="term" value="P:spermatogenesis"/>
    <property type="evidence" value="ECO:0007669"/>
    <property type="project" value="Ensembl"/>
</dbReference>
<dbReference type="GO" id="GO:0060157">
    <property type="term" value="P:urinary bladder development"/>
    <property type="evidence" value="ECO:0007669"/>
    <property type="project" value="Ensembl"/>
</dbReference>
<dbReference type="GO" id="GO:0060065">
    <property type="term" value="P:uterus development"/>
    <property type="evidence" value="ECO:0007669"/>
    <property type="project" value="Ensembl"/>
</dbReference>
<dbReference type="GO" id="GO:0060068">
    <property type="term" value="P:vagina development"/>
    <property type="evidence" value="ECO:0007669"/>
    <property type="project" value="Ensembl"/>
</dbReference>
<dbReference type="GO" id="GO:0071939">
    <property type="term" value="P:vitamin A import into cell"/>
    <property type="evidence" value="ECO:0007669"/>
    <property type="project" value="Ensembl"/>
</dbReference>
<dbReference type="CDD" id="cd00743">
    <property type="entry name" value="lipocalin_RBP_like"/>
    <property type="match status" value="1"/>
</dbReference>
<dbReference type="FunFam" id="2.40.128.20:FF:000004">
    <property type="entry name" value="Retinol-binding protein 4"/>
    <property type="match status" value="1"/>
</dbReference>
<dbReference type="Gene3D" id="2.40.128.20">
    <property type="match status" value="1"/>
</dbReference>
<dbReference type="InterPro" id="IPR012674">
    <property type="entry name" value="Calycin"/>
</dbReference>
<dbReference type="InterPro" id="IPR022271">
    <property type="entry name" value="Lipocalin_ApoD"/>
</dbReference>
<dbReference type="InterPro" id="IPR022272">
    <property type="entry name" value="Lipocalin_CS"/>
</dbReference>
<dbReference type="InterPro" id="IPR000566">
    <property type="entry name" value="Lipocln_cytosolic_FA-bd_dom"/>
</dbReference>
<dbReference type="InterPro" id="IPR002449">
    <property type="entry name" value="Retinol-bd/Purpurin"/>
</dbReference>
<dbReference type="PANTHER" id="PTHR11873">
    <property type="entry name" value="RETINOL-BINDING PROTEIN 4"/>
    <property type="match status" value="1"/>
</dbReference>
<dbReference type="PANTHER" id="PTHR11873:SF2">
    <property type="entry name" value="RETINOL-BINDING PROTEIN 4"/>
    <property type="match status" value="1"/>
</dbReference>
<dbReference type="Pfam" id="PF00061">
    <property type="entry name" value="Lipocalin"/>
    <property type="match status" value="1"/>
</dbReference>
<dbReference type="PIRSF" id="PIRSF036893">
    <property type="entry name" value="Lipocalin_ApoD"/>
    <property type="match status" value="1"/>
</dbReference>
<dbReference type="PIRSF" id="PIRSF500204">
    <property type="entry name" value="RBP_purpurin"/>
    <property type="match status" value="1"/>
</dbReference>
<dbReference type="PRINTS" id="PR00179">
    <property type="entry name" value="LIPOCALIN"/>
</dbReference>
<dbReference type="PRINTS" id="PR01174">
    <property type="entry name" value="RETINOLBNDNG"/>
</dbReference>
<dbReference type="SUPFAM" id="SSF50814">
    <property type="entry name" value="Lipocalins"/>
    <property type="match status" value="1"/>
</dbReference>
<dbReference type="PROSITE" id="PS00213">
    <property type="entry name" value="LIPOCALIN"/>
    <property type="match status" value="1"/>
</dbReference>
<keyword id="KW-1015">Disulfide bond</keyword>
<keyword id="KW-0488">Methylation</keyword>
<keyword id="KW-1185">Reference proteome</keyword>
<keyword id="KW-0683">Retinol-binding</keyword>
<keyword id="KW-0964">Secreted</keyword>
<keyword id="KW-0732">Signal</keyword>
<keyword id="KW-0813">Transport</keyword>
<keyword id="KW-0845">Vitamin A</keyword>
<accession>P61641</accession>
<name>RET4_PANTR</name>
<evidence type="ECO:0000250" key="1">
    <source>
        <dbReference type="UniProtKB" id="P02753"/>
    </source>
</evidence>
<evidence type="ECO:0000250" key="2">
    <source>
        <dbReference type="UniProtKB" id="P27485"/>
    </source>
</evidence>
<evidence type="ECO:0000250" key="3">
    <source>
        <dbReference type="UniProtKB" id="Q00724"/>
    </source>
</evidence>
<evidence type="ECO:0000305" key="4"/>